<protein>
    <recommendedName>
        <fullName>Calcium-transporting ATPase type 2C member 1</fullName>
        <shortName>ATPase 2C1</shortName>
        <ecNumber evidence="2">7.2.2.10</ecNumber>
    </recommendedName>
    <alternativeName>
        <fullName>ATP-dependent Ca(2+) pump PMR1</fullName>
    </alternativeName>
    <alternativeName>
        <fullName evidence="2">Ca(2+)/Mn(2+)-ATPase 2C1</fullName>
    </alternativeName>
    <alternativeName>
        <fullName>Secretory pathway Ca(2+)-transporting ATPase type 1</fullName>
        <shortName evidence="2">SPCA1</shortName>
    </alternativeName>
</protein>
<evidence type="ECO:0000250" key="1"/>
<evidence type="ECO:0000250" key="2">
    <source>
        <dbReference type="UniProtKB" id="P98194"/>
    </source>
</evidence>
<evidence type="ECO:0000250" key="3">
    <source>
        <dbReference type="UniProtKB" id="Q80XR2"/>
    </source>
</evidence>
<evidence type="ECO:0000255" key="4"/>
<evidence type="ECO:0000305" key="5"/>
<sequence>MDNLLPQSRFSYFKKYPIHAIRKYLSMLRNQKEEEQVARFQKIPNAENETMIPVLTSKKASELPVSEVASILQADLQNGLNKCEVSHRRAFHGWNEFDISEDEPLWKKYISQFKNPLIMLLLASAVISVLMHQFDDAVSITVAILIVVTVAFVQEYRSEKSLEELSKLMPPECHCVREGKLEHTLARDLVPGDTVCLSVGDRVPADLRLFEAVDLSVDESSLTGETTPCSKVTAPQPAATNGDLASRSNIAFMGTLVRCGKAKGIVIGTGENSEFGEVFKMMQAEEAPKTPLQKSMDLLGKQLSFYSFGIIGIIMLVGWLLGKDILEMFTISVSLAVAAIPEGLPIVVTVTLALGVMRMVKKRAIVKKLPIVETLGCCNVICSDKTGTLTKNEMTVTHIFTSDGLRAEVTGVGYNPFGEVIVDGDVVHGFYNPSVSRIVEAGCVCNDAVIRNNTLMGKPTEGALIALAMKMGLDGLQQDYIRKAEYPFSSEQKWMAVKCVHRTQQDRPEICFMKGAYEQVIKYCTTYHSKGQTLTLTQQQRDLYQQEKAQMGSAGLRVLALASGPELGQLTFLGLVGIIDPPRTGVKEAVTTLIASGVSIKMITGDSQETAVAIASRLGLYSKTSQSVSGEEIDAMDVQQLSQIVPKVAVFYRASPRHKMKIIKSLQKNGSVVAMTGDGVNDAVALKAADIGVAMGQTGTDVCKEAADMILVDDDFQTIMSAIEEGKGIYNNIKNFVRFQLSTSIAALTLISLATLMNFPNPLNAMQILWINIIMDGPPAQSLGVEPVDKDVIRKPPRNWKDSILTKNLILKILVSSIIIVCGTLFVFWRELRDNVITPRDTTMTFTCFVFFDMFNALSSRSQTKSVFEIGLCSNKMFCYAVLGSIMGQLLVIYFPPLQKVFQTESLSILDLLFLLGLTSSVCIVAEIIKKVERSREKIQKPVSSTSSSFLEV</sequence>
<proteinExistence type="evidence at transcript level"/>
<comment type="function">
    <text evidence="2 3">ATP-driven pump that supplies the Golgi apparatus with Ca(2+) and Mn(2+) ions, both essential cofactors for processing and trafficking of newly synthesized proteins in the secretory pathway (By similarity). Within a catalytic cycle, acquires Ca(2+) or Mn(2+) ions on the cytoplasmic side of the membrane and delivers them to the lumenal side. The transfer of ions across the membrane is coupled to ATP hydrolysis and is associated with a transient phosphorylation that shifts the pump conformation from inward-facing to outward-facing state (By similarity). Plays a primary role in the maintenance of Ca(2+) homeostasis in the trans-Golgi compartment with a functional impact on Golgi and post-Golgi protein sorting as well as a structural impact on cisternae morphology. Responsible for loading the Golgi stores with Ca(2+) ions in keratinocytes, contributing to keratinocyte differentiation and epidermis integrity (By similarity). Participates in Ca(2+) and Mn(2+) ions uptake into the Golgi store of hippocampal neurons and regulates protein trafficking required for neural polarity (By similarity). May also play a role in the maintenance of Ca(2+) and Mn(2+) homeostasis and signaling in the cytosol while preventing cytotoxicity (By similarity).</text>
</comment>
<comment type="catalytic activity">
    <reaction evidence="2">
        <text>Ca(2+)(in) + ATP + H2O = Ca(2+)(out) + ADP + phosphate + H(+)</text>
        <dbReference type="Rhea" id="RHEA:18105"/>
        <dbReference type="ChEBI" id="CHEBI:15377"/>
        <dbReference type="ChEBI" id="CHEBI:15378"/>
        <dbReference type="ChEBI" id="CHEBI:29108"/>
        <dbReference type="ChEBI" id="CHEBI:30616"/>
        <dbReference type="ChEBI" id="CHEBI:43474"/>
        <dbReference type="ChEBI" id="CHEBI:456216"/>
        <dbReference type="EC" id="7.2.2.10"/>
    </reaction>
    <physiologicalReaction direction="left-to-right" evidence="2">
        <dbReference type="Rhea" id="RHEA:18106"/>
    </physiologicalReaction>
</comment>
<comment type="catalytic activity">
    <reaction evidence="2">
        <text>Mn(2+)(in) + ATP + H2O = Mn(2+)(out) + ADP + phosphate + H(+)</text>
        <dbReference type="Rhea" id="RHEA:66820"/>
        <dbReference type="ChEBI" id="CHEBI:15377"/>
        <dbReference type="ChEBI" id="CHEBI:15378"/>
        <dbReference type="ChEBI" id="CHEBI:29035"/>
        <dbReference type="ChEBI" id="CHEBI:30616"/>
        <dbReference type="ChEBI" id="CHEBI:43474"/>
        <dbReference type="ChEBI" id="CHEBI:456216"/>
    </reaction>
    <physiologicalReaction direction="left-to-right" evidence="2">
        <dbReference type="Rhea" id="RHEA:66821"/>
    </physiologicalReaction>
</comment>
<comment type="subunit">
    <text evidence="2">Monomer. Homodimer.</text>
</comment>
<comment type="subcellular location">
    <subcellularLocation>
        <location evidence="2">Golgi apparatus</location>
        <location evidence="2">trans-Golgi network membrane</location>
        <topology evidence="4">Multi-pass membrane protein</topology>
    </subcellularLocation>
    <subcellularLocation>
        <location evidence="2">Golgi apparatus</location>
        <location evidence="2">Golgi stack membrane</location>
        <topology evidence="4">Multi-pass membrane protein</topology>
    </subcellularLocation>
    <text evidence="3">During neuron differentiation, shifts from juxtanuclear Golgi position to multiple Golgi structures distributed over the neural soma with a predominance in the apical dendritic trunk.</text>
</comment>
<comment type="similarity">
    <text evidence="5">Belongs to the cation transport ATPase (P-type) (TC 3.A.3) family. Type IIA subfamily.</text>
</comment>
<accession>P57709</accession>
<reference key="1">
    <citation type="submission" date="2000-02" db="EMBL/GenBank/DDBJ databases">
        <title>Bos taurus mRNA encoding putative secretory pathway Ca2+-transporting ATPase (SPCA).</title>
        <authorList>
            <person name="Prapong S."/>
            <person name="Reinhardt T.A."/>
        </authorList>
    </citation>
    <scope>NUCLEOTIDE SEQUENCE [MRNA]</scope>
</reference>
<keyword id="KW-0067">ATP-binding</keyword>
<keyword id="KW-0106">Calcium</keyword>
<keyword id="KW-0109">Calcium transport</keyword>
<keyword id="KW-0333">Golgi apparatus</keyword>
<keyword id="KW-0406">Ion transport</keyword>
<keyword id="KW-0460">Magnesium</keyword>
<keyword id="KW-0472">Membrane</keyword>
<keyword id="KW-0479">Metal-binding</keyword>
<keyword id="KW-0547">Nucleotide-binding</keyword>
<keyword id="KW-1185">Reference proteome</keyword>
<keyword id="KW-1278">Translocase</keyword>
<keyword id="KW-0812">Transmembrane</keyword>
<keyword id="KW-1133">Transmembrane helix</keyword>
<keyword id="KW-0813">Transport</keyword>
<gene>
    <name type="primary">ATP2C1</name>
    <name type="synonym">SPCA</name>
</gene>
<feature type="chain" id="PRO_0000046222" description="Calcium-transporting ATPase type 2C member 1">
    <location>
        <begin position="1"/>
        <end position="953"/>
    </location>
</feature>
<feature type="topological domain" description="Cytoplasmic" evidence="1">
    <location>
        <begin position="1"/>
        <end position="104"/>
    </location>
</feature>
<feature type="transmembrane region" description="Helical; Name=1" evidence="1">
    <location>
        <begin position="105"/>
        <end position="125"/>
    </location>
</feature>
<feature type="topological domain" description="Lumenal" evidence="1">
    <location>
        <begin position="126"/>
        <end position="138"/>
    </location>
</feature>
<feature type="transmembrane region" description="Helical; Name=2" evidence="1">
    <location>
        <begin position="139"/>
        <end position="157"/>
    </location>
</feature>
<feature type="topological domain" description="Cytoplasmic" evidence="1">
    <location>
        <begin position="158"/>
        <end position="296"/>
    </location>
</feature>
<feature type="transmembrane region" description="Helical; Name=3" evidence="1">
    <location>
        <begin position="297"/>
        <end position="316"/>
    </location>
</feature>
<feature type="topological domain" description="Lumenal" evidence="1">
    <location>
        <begin position="317"/>
        <end position="328"/>
    </location>
</feature>
<feature type="transmembrane region" description="Helical; Name=4" evidence="1">
    <location>
        <begin position="329"/>
        <end position="346"/>
    </location>
</feature>
<feature type="topological domain" description="Cytoplasmic" evidence="1">
    <location>
        <begin position="347"/>
        <end position="733"/>
    </location>
</feature>
<feature type="transmembrane region" description="Helical; Name=5" evidence="1">
    <location>
        <begin position="734"/>
        <end position="753"/>
    </location>
</feature>
<feature type="topological domain" description="Lumenal" evidence="1">
    <location>
        <begin position="754"/>
        <end position="763"/>
    </location>
</feature>
<feature type="transmembrane region" description="Helical; Name=6" evidence="1">
    <location>
        <begin position="764"/>
        <end position="784"/>
    </location>
</feature>
<feature type="topological domain" description="Cytoplasmic" evidence="1">
    <location>
        <begin position="785"/>
        <end position="804"/>
    </location>
</feature>
<feature type="transmembrane region" description="Helical; Name=7" evidence="1">
    <location>
        <begin position="805"/>
        <end position="824"/>
    </location>
</feature>
<feature type="topological domain" description="Lumenal" evidence="1">
    <location>
        <begin position="825"/>
        <end position="842"/>
    </location>
</feature>
<feature type="transmembrane region" description="Helical; Name=8" evidence="1">
    <location>
        <begin position="843"/>
        <end position="862"/>
    </location>
</feature>
<feature type="topological domain" description="Cytoplasmic" evidence="1">
    <location>
        <begin position="863"/>
        <end position="875"/>
    </location>
</feature>
<feature type="transmembrane region" description="Helical; Name=9" evidence="1">
    <location>
        <begin position="876"/>
        <end position="894"/>
    </location>
</feature>
<feature type="topological domain" description="Lumenal" evidence="1">
    <location>
        <begin position="895"/>
        <end position="909"/>
    </location>
</feature>
<feature type="transmembrane region" description="Helical; Name=10" evidence="1">
    <location>
        <begin position="910"/>
        <end position="930"/>
    </location>
</feature>
<feature type="topological domain" description="Cytoplasmic" evidence="1">
    <location>
        <begin position="931"/>
        <end position="953"/>
    </location>
</feature>
<feature type="active site" description="4-aspartylphosphate intermediate" evidence="1">
    <location>
        <position position="384"/>
    </location>
</feature>
<feature type="binding site" evidence="1">
    <location>
        <position position="337"/>
    </location>
    <ligand>
        <name>Ca(2+)</name>
        <dbReference type="ChEBI" id="CHEBI:29108"/>
        <label>2</label>
    </ligand>
</feature>
<feature type="binding site" evidence="1">
    <location>
        <position position="338"/>
    </location>
    <ligand>
        <name>Ca(2+)</name>
        <dbReference type="ChEBI" id="CHEBI:29108"/>
        <label>2</label>
    </ligand>
</feature>
<feature type="binding site" evidence="1">
    <location>
        <position position="340"/>
    </location>
    <ligand>
        <name>Ca(2+)</name>
        <dbReference type="ChEBI" id="CHEBI:29108"/>
        <label>2</label>
    </ligand>
</feature>
<feature type="binding site" evidence="1">
    <location>
        <position position="342"/>
    </location>
    <ligand>
        <name>Ca(2+)</name>
        <dbReference type="ChEBI" id="CHEBI:29108"/>
        <label>2</label>
    </ligand>
</feature>
<feature type="binding site" evidence="1">
    <location>
        <position position="678"/>
    </location>
    <ligand>
        <name>Mg(2+)</name>
        <dbReference type="ChEBI" id="CHEBI:18420"/>
    </ligand>
</feature>
<feature type="binding site" evidence="1">
    <location>
        <position position="682"/>
    </location>
    <ligand>
        <name>Mg(2+)</name>
        <dbReference type="ChEBI" id="CHEBI:18420"/>
    </ligand>
</feature>
<feature type="binding site" evidence="1">
    <location>
        <position position="772"/>
    </location>
    <ligand>
        <name>Ca(2+)</name>
        <dbReference type="ChEBI" id="CHEBI:29108"/>
        <label>2</label>
    </ligand>
</feature>
<feature type="binding site" evidence="1">
    <location>
        <position position="776"/>
    </location>
    <ligand>
        <name>Ca(2+)</name>
        <dbReference type="ChEBI" id="CHEBI:29108"/>
        <label>2</label>
    </ligand>
</feature>
<name>AT2C1_BOVIN</name>
<organism>
    <name type="scientific">Bos taurus</name>
    <name type="common">Bovine</name>
    <dbReference type="NCBI Taxonomy" id="9913"/>
    <lineage>
        <taxon>Eukaryota</taxon>
        <taxon>Metazoa</taxon>
        <taxon>Chordata</taxon>
        <taxon>Craniata</taxon>
        <taxon>Vertebrata</taxon>
        <taxon>Euteleostomi</taxon>
        <taxon>Mammalia</taxon>
        <taxon>Eutheria</taxon>
        <taxon>Laurasiatheria</taxon>
        <taxon>Artiodactyla</taxon>
        <taxon>Ruminantia</taxon>
        <taxon>Pecora</taxon>
        <taxon>Bovidae</taxon>
        <taxon>Bovinae</taxon>
        <taxon>Bos</taxon>
    </lineage>
</organism>
<dbReference type="EC" id="7.2.2.10" evidence="2"/>
<dbReference type="EMBL" id="AF230532">
    <property type="protein sequence ID" value="AAF64433.1"/>
    <property type="molecule type" value="mRNA"/>
</dbReference>
<dbReference type="RefSeq" id="NP_786979.1">
    <property type="nucleotide sequence ID" value="NM_175785.2"/>
</dbReference>
<dbReference type="SMR" id="P57709"/>
<dbReference type="FunCoup" id="P57709">
    <property type="interactions" value="2355"/>
</dbReference>
<dbReference type="STRING" id="9913.ENSBTAP00000072313"/>
<dbReference type="PaxDb" id="9913-ENSBTAP00000015441"/>
<dbReference type="Ensembl" id="ENSBTAT00000114603.1">
    <property type="protein sequence ID" value="ENSBTAP00000075186.1"/>
    <property type="gene ID" value="ENSBTAG00000011626.6"/>
</dbReference>
<dbReference type="GeneID" id="327663"/>
<dbReference type="KEGG" id="bta:327663"/>
<dbReference type="CTD" id="27032"/>
<dbReference type="VEuPathDB" id="HostDB:ENSBTAG00000011626"/>
<dbReference type="VGNC" id="VGNC:26296">
    <property type="gene designation" value="ATP2C1"/>
</dbReference>
<dbReference type="eggNOG" id="KOG0202">
    <property type="taxonomic scope" value="Eukaryota"/>
</dbReference>
<dbReference type="GeneTree" id="ENSGT00940000156421"/>
<dbReference type="HOGENOM" id="CLU_002360_3_1_1"/>
<dbReference type="InParanoid" id="P57709"/>
<dbReference type="OMA" id="KMHACET"/>
<dbReference type="OrthoDB" id="3352408at2759"/>
<dbReference type="TreeFam" id="TF354251"/>
<dbReference type="Reactome" id="R-BTA-936837">
    <property type="pathway name" value="Ion transport by P-type ATPases"/>
</dbReference>
<dbReference type="Proteomes" id="UP000009136">
    <property type="component" value="Chromosome 1"/>
</dbReference>
<dbReference type="Bgee" id="ENSBTAG00000011626">
    <property type="expression patterns" value="Expressed in oviduct epithelium and 108 other cell types or tissues"/>
</dbReference>
<dbReference type="GO" id="GO:0033106">
    <property type="term" value="C:cis-Golgi network membrane"/>
    <property type="evidence" value="ECO:0000250"/>
    <property type="project" value="UniProtKB"/>
</dbReference>
<dbReference type="GO" id="GO:0005783">
    <property type="term" value="C:endoplasmic reticulum"/>
    <property type="evidence" value="ECO:0000318"/>
    <property type="project" value="GO_Central"/>
</dbReference>
<dbReference type="GO" id="GO:0005794">
    <property type="term" value="C:Golgi apparatus"/>
    <property type="evidence" value="ECO:0000250"/>
    <property type="project" value="UniProtKB"/>
</dbReference>
<dbReference type="GO" id="GO:0032580">
    <property type="term" value="C:Golgi cisterna membrane"/>
    <property type="evidence" value="ECO:0000250"/>
    <property type="project" value="UniProtKB"/>
</dbReference>
<dbReference type="GO" id="GO:0000139">
    <property type="term" value="C:Golgi membrane"/>
    <property type="evidence" value="ECO:0000250"/>
    <property type="project" value="UniProtKB"/>
</dbReference>
<dbReference type="GO" id="GO:0005886">
    <property type="term" value="C:plasma membrane"/>
    <property type="evidence" value="ECO:0000318"/>
    <property type="project" value="GO_Central"/>
</dbReference>
<dbReference type="GO" id="GO:0005802">
    <property type="term" value="C:trans-Golgi network"/>
    <property type="evidence" value="ECO:0000250"/>
    <property type="project" value="UniProtKB"/>
</dbReference>
<dbReference type="GO" id="GO:0005524">
    <property type="term" value="F:ATP binding"/>
    <property type="evidence" value="ECO:0000250"/>
    <property type="project" value="UniProtKB"/>
</dbReference>
<dbReference type="GO" id="GO:0016887">
    <property type="term" value="F:ATP hydrolysis activity"/>
    <property type="evidence" value="ECO:0007669"/>
    <property type="project" value="InterPro"/>
</dbReference>
<dbReference type="GO" id="GO:0005509">
    <property type="term" value="F:calcium ion binding"/>
    <property type="evidence" value="ECO:0000250"/>
    <property type="project" value="UniProtKB"/>
</dbReference>
<dbReference type="GO" id="GO:0030145">
    <property type="term" value="F:manganese ion binding"/>
    <property type="evidence" value="ECO:0000250"/>
    <property type="project" value="UniProtKB"/>
</dbReference>
<dbReference type="GO" id="GO:0005388">
    <property type="term" value="F:P-type calcium transporter activity"/>
    <property type="evidence" value="ECO:0000250"/>
    <property type="project" value="UniProtKB"/>
</dbReference>
<dbReference type="GO" id="GO:0140613">
    <property type="term" value="F:P-type manganese transporter activity"/>
    <property type="evidence" value="ECO:0000250"/>
    <property type="project" value="UniProtKB"/>
</dbReference>
<dbReference type="GO" id="GO:0030036">
    <property type="term" value="P:actin cytoskeleton organization"/>
    <property type="evidence" value="ECO:0000250"/>
    <property type="project" value="UniProtKB"/>
</dbReference>
<dbReference type="GO" id="GO:0070588">
    <property type="term" value="P:calcium ion transmembrane transport"/>
    <property type="evidence" value="ECO:0000318"/>
    <property type="project" value="GO_Central"/>
</dbReference>
<dbReference type="GO" id="GO:0006816">
    <property type="term" value="P:calcium ion transport"/>
    <property type="evidence" value="ECO:0000250"/>
    <property type="project" value="UniProtKB"/>
</dbReference>
<dbReference type="GO" id="GO:0016339">
    <property type="term" value="P:calcium-dependent cell-cell adhesion via plasma membrane cell adhesion molecules"/>
    <property type="evidence" value="ECO:0000250"/>
    <property type="project" value="UniProtKB"/>
</dbReference>
<dbReference type="GO" id="GO:0008544">
    <property type="term" value="P:epidermis development"/>
    <property type="evidence" value="ECO:0000250"/>
    <property type="project" value="UniProtKB"/>
</dbReference>
<dbReference type="GO" id="GO:0032468">
    <property type="term" value="P:Golgi calcium ion homeostasis"/>
    <property type="evidence" value="ECO:0000250"/>
    <property type="project" value="UniProtKB"/>
</dbReference>
<dbReference type="GO" id="GO:0032472">
    <property type="term" value="P:Golgi calcium ion transport"/>
    <property type="evidence" value="ECO:0000250"/>
    <property type="project" value="UniProtKB"/>
</dbReference>
<dbReference type="GO" id="GO:0006874">
    <property type="term" value="P:intracellular calcium ion homeostasis"/>
    <property type="evidence" value="ECO:0000250"/>
    <property type="project" value="UniProtKB"/>
</dbReference>
<dbReference type="GO" id="GO:0030026">
    <property type="term" value="P:intracellular manganese ion homeostasis"/>
    <property type="evidence" value="ECO:0000250"/>
    <property type="project" value="UniProtKB"/>
</dbReference>
<dbReference type="GO" id="GO:0006828">
    <property type="term" value="P:manganese ion transport"/>
    <property type="evidence" value="ECO:0000250"/>
    <property type="project" value="UniProtKB"/>
</dbReference>
<dbReference type="GO" id="GO:0043123">
    <property type="term" value="P:positive regulation of canonical NF-kappaB signal transduction"/>
    <property type="evidence" value="ECO:0000250"/>
    <property type="project" value="UniProtKB"/>
</dbReference>
<dbReference type="GO" id="GO:0042998">
    <property type="term" value="P:positive regulation of Golgi to plasma membrane protein transport"/>
    <property type="evidence" value="ECO:0000250"/>
    <property type="project" value="UniProtKB"/>
</dbReference>
<dbReference type="GO" id="GO:0098629">
    <property type="term" value="P:trans-Golgi network membrane organization"/>
    <property type="evidence" value="ECO:0000250"/>
    <property type="project" value="UniProtKB"/>
</dbReference>
<dbReference type="CDD" id="cd02085">
    <property type="entry name" value="P-type_ATPase_SPCA"/>
    <property type="match status" value="1"/>
</dbReference>
<dbReference type="FunFam" id="2.70.150.10:FF:000008">
    <property type="entry name" value="Calcium-transporting ATPase"/>
    <property type="match status" value="1"/>
</dbReference>
<dbReference type="FunFam" id="3.40.1110.10:FF:000006">
    <property type="entry name" value="Calcium-transporting ATPase"/>
    <property type="match status" value="1"/>
</dbReference>
<dbReference type="FunFam" id="3.40.50.1000:FF:000017">
    <property type="entry name" value="Calcium-transporting ATPase"/>
    <property type="match status" value="1"/>
</dbReference>
<dbReference type="FunFam" id="3.40.50.1000:FF:000001">
    <property type="entry name" value="Phospholipid-transporting ATPase IC"/>
    <property type="match status" value="1"/>
</dbReference>
<dbReference type="Gene3D" id="3.40.1110.10">
    <property type="entry name" value="Calcium-transporting ATPase, cytoplasmic domain N"/>
    <property type="match status" value="1"/>
</dbReference>
<dbReference type="Gene3D" id="2.70.150.10">
    <property type="entry name" value="Calcium-transporting ATPase, cytoplasmic transduction domain A"/>
    <property type="match status" value="1"/>
</dbReference>
<dbReference type="Gene3D" id="1.20.1110.10">
    <property type="entry name" value="Calcium-transporting ATPase, transmembrane domain"/>
    <property type="match status" value="1"/>
</dbReference>
<dbReference type="Gene3D" id="3.40.50.1000">
    <property type="entry name" value="HAD superfamily/HAD-like"/>
    <property type="match status" value="1"/>
</dbReference>
<dbReference type="InterPro" id="IPR006068">
    <property type="entry name" value="ATPase_P-typ_cation-transptr_C"/>
</dbReference>
<dbReference type="InterPro" id="IPR004014">
    <property type="entry name" value="ATPase_P-typ_cation-transptr_N"/>
</dbReference>
<dbReference type="InterPro" id="IPR023299">
    <property type="entry name" value="ATPase_P-typ_cyto_dom_N"/>
</dbReference>
<dbReference type="InterPro" id="IPR018303">
    <property type="entry name" value="ATPase_P-typ_P_site"/>
</dbReference>
<dbReference type="InterPro" id="IPR023298">
    <property type="entry name" value="ATPase_P-typ_TM_dom_sf"/>
</dbReference>
<dbReference type="InterPro" id="IPR008250">
    <property type="entry name" value="ATPase_P-typ_transduc_dom_A_sf"/>
</dbReference>
<dbReference type="InterPro" id="IPR036412">
    <property type="entry name" value="HAD-like_sf"/>
</dbReference>
<dbReference type="InterPro" id="IPR023214">
    <property type="entry name" value="HAD_sf"/>
</dbReference>
<dbReference type="InterPro" id="IPR006413">
    <property type="entry name" value="P-type_ATPase_IIA_PMR1"/>
</dbReference>
<dbReference type="InterPro" id="IPR001757">
    <property type="entry name" value="P_typ_ATPase"/>
</dbReference>
<dbReference type="InterPro" id="IPR044492">
    <property type="entry name" value="P_typ_ATPase_HD_dom"/>
</dbReference>
<dbReference type="NCBIfam" id="TIGR01522">
    <property type="entry name" value="ATPase-IIA2_Ca"/>
    <property type="match status" value="1"/>
</dbReference>
<dbReference type="NCBIfam" id="TIGR01494">
    <property type="entry name" value="ATPase_P-type"/>
    <property type="match status" value="3"/>
</dbReference>
<dbReference type="PANTHER" id="PTHR42861">
    <property type="entry name" value="CALCIUM-TRANSPORTING ATPASE"/>
    <property type="match status" value="1"/>
</dbReference>
<dbReference type="Pfam" id="PF13246">
    <property type="entry name" value="Cation_ATPase"/>
    <property type="match status" value="1"/>
</dbReference>
<dbReference type="Pfam" id="PF00689">
    <property type="entry name" value="Cation_ATPase_C"/>
    <property type="match status" value="1"/>
</dbReference>
<dbReference type="Pfam" id="PF00690">
    <property type="entry name" value="Cation_ATPase_N"/>
    <property type="match status" value="1"/>
</dbReference>
<dbReference type="Pfam" id="PF00122">
    <property type="entry name" value="E1-E2_ATPase"/>
    <property type="match status" value="1"/>
</dbReference>
<dbReference type="PRINTS" id="PR00119">
    <property type="entry name" value="CATATPASE"/>
</dbReference>
<dbReference type="PRINTS" id="PR00120">
    <property type="entry name" value="HATPASE"/>
</dbReference>
<dbReference type="SFLD" id="SFLDG00002">
    <property type="entry name" value="C1.7:_P-type_atpase_like"/>
    <property type="match status" value="1"/>
</dbReference>
<dbReference type="SFLD" id="SFLDF00027">
    <property type="entry name" value="p-type_atpase"/>
    <property type="match status" value="1"/>
</dbReference>
<dbReference type="SMART" id="SM00831">
    <property type="entry name" value="Cation_ATPase_N"/>
    <property type="match status" value="1"/>
</dbReference>
<dbReference type="SUPFAM" id="SSF81653">
    <property type="entry name" value="Calcium ATPase, transduction domain A"/>
    <property type="match status" value="1"/>
</dbReference>
<dbReference type="SUPFAM" id="SSF81665">
    <property type="entry name" value="Calcium ATPase, transmembrane domain M"/>
    <property type="match status" value="1"/>
</dbReference>
<dbReference type="SUPFAM" id="SSF56784">
    <property type="entry name" value="HAD-like"/>
    <property type="match status" value="1"/>
</dbReference>
<dbReference type="PROSITE" id="PS00154">
    <property type="entry name" value="ATPASE_E1_E2"/>
    <property type="match status" value="1"/>
</dbReference>